<organism>
    <name type="scientific">Staphylococcus aureus (strain MW2)</name>
    <dbReference type="NCBI Taxonomy" id="196620"/>
    <lineage>
        <taxon>Bacteria</taxon>
        <taxon>Bacillati</taxon>
        <taxon>Bacillota</taxon>
        <taxon>Bacilli</taxon>
        <taxon>Bacillales</taxon>
        <taxon>Staphylococcaceae</taxon>
        <taxon>Staphylococcus</taxon>
    </lineage>
</organism>
<evidence type="ECO:0000250" key="1"/>
<evidence type="ECO:0000255" key="2"/>
<evidence type="ECO:0000255" key="3">
    <source>
        <dbReference type="PROSITE-ProRule" id="PRU00048"/>
    </source>
</evidence>
<sequence length="269" mass="29604">MKKIATATIATAGFATIAIASGNQAHASEQDNYGYNPNDPTSYSYTYTIDAQGNYHYTWKGNWHPSQLNQDNGYYSYYYYNGYNNYNYNNYNNGYSYNNYSRYNNYSNNNQSYNYNNYNSYNTNSYRTGGLGASYSTSSNNVQVTTTMAPSSNGRSISSGYTSGRNLYTSGQCTYYVFDRVGGKIGSTWGNASNWANAAARAGYTVNNTPKAGAIMQTTQGAYGHVAYVESVNSNGSVRVSEMNYGYGPGVVTSRTISASQAAGYNFIH</sequence>
<dbReference type="EMBL" id="BA000033">
    <property type="protein sequence ID" value="BAB96082.1"/>
    <property type="molecule type" value="Genomic_DNA"/>
</dbReference>
<dbReference type="RefSeq" id="WP_000717388.1">
    <property type="nucleotide sequence ID" value="NC_003923.1"/>
</dbReference>
<dbReference type="SMR" id="Q8NV83"/>
<dbReference type="KEGG" id="sam:MW2217"/>
<dbReference type="HOGENOM" id="CLU_016043_11_0_9"/>
<dbReference type="GO" id="GO:0005576">
    <property type="term" value="C:extracellular region"/>
    <property type="evidence" value="ECO:0007669"/>
    <property type="project" value="UniProtKB-SubCell"/>
</dbReference>
<dbReference type="Gene3D" id="3.90.1720.10">
    <property type="entry name" value="endopeptidase domain like (from Nostoc punctiforme)"/>
    <property type="match status" value="1"/>
</dbReference>
<dbReference type="InterPro" id="IPR007921">
    <property type="entry name" value="CHAP_dom"/>
</dbReference>
<dbReference type="InterPro" id="IPR038765">
    <property type="entry name" value="Papain-like_cys_pep_sf"/>
</dbReference>
<dbReference type="Pfam" id="PF05257">
    <property type="entry name" value="CHAP"/>
    <property type="match status" value="1"/>
</dbReference>
<dbReference type="SUPFAM" id="SSF54001">
    <property type="entry name" value="Cysteine proteinases"/>
    <property type="match status" value="1"/>
</dbReference>
<dbReference type="PROSITE" id="PS50911">
    <property type="entry name" value="CHAP"/>
    <property type="match status" value="1"/>
</dbReference>
<accession>Q8NV83</accession>
<gene>
    <name type="primary">ssaA2</name>
    <name type="ordered locus">MW2217</name>
</gene>
<proteinExistence type="inferred from homology"/>
<name>SSAA2_STAAW</name>
<comment type="function">
    <text evidence="1">Not known; immunogenic protein.</text>
</comment>
<comment type="subcellular location">
    <subcellularLocation>
        <location evidence="1">Secreted</location>
    </subcellularLocation>
</comment>
<feature type="signal peptide" evidence="2">
    <location>
        <begin position="1"/>
        <end position="27"/>
    </location>
</feature>
<feature type="chain" id="PRO_0000045319" description="Staphylococcal secretory antigen ssaA2">
    <location>
        <begin position="28"/>
        <end position="269"/>
    </location>
</feature>
<feature type="repeat" description="1">
    <location>
        <begin position="83"/>
        <end position="85"/>
    </location>
</feature>
<feature type="repeat" description="2">
    <location>
        <begin position="86"/>
        <end position="88"/>
    </location>
</feature>
<feature type="repeat" description="3">
    <location>
        <begin position="89"/>
        <end position="91"/>
    </location>
</feature>
<feature type="repeat" description="4">
    <location>
        <begin position="95"/>
        <end position="97"/>
    </location>
</feature>
<feature type="repeat" description="5">
    <location>
        <begin position="101"/>
        <end position="103"/>
    </location>
</feature>
<feature type="repeat" description="6">
    <location>
        <begin position="104"/>
        <end position="106"/>
    </location>
</feature>
<feature type="repeat" description="7">
    <location>
        <begin position="113"/>
        <end position="115"/>
    </location>
</feature>
<feature type="domain" description="Peptidase C51" evidence="3">
    <location>
        <begin position="148"/>
        <end position="269"/>
    </location>
</feature>
<feature type="region of interest" description="7 X 3 AA repeats of Y-[NS]-N">
    <location>
        <begin position="83"/>
        <end position="115"/>
    </location>
</feature>
<protein>
    <recommendedName>
        <fullName>Staphylococcal secretory antigen ssaA2</fullName>
    </recommendedName>
</protein>
<reference key="1">
    <citation type="journal article" date="2002" name="Lancet">
        <title>Genome and virulence determinants of high virulence community-acquired MRSA.</title>
        <authorList>
            <person name="Baba T."/>
            <person name="Takeuchi F."/>
            <person name="Kuroda M."/>
            <person name="Yuzawa H."/>
            <person name="Aoki K."/>
            <person name="Oguchi A."/>
            <person name="Nagai Y."/>
            <person name="Iwama N."/>
            <person name="Asano K."/>
            <person name="Naimi T."/>
            <person name="Kuroda H."/>
            <person name="Cui L."/>
            <person name="Yamamoto K."/>
            <person name="Hiramatsu K."/>
        </authorList>
    </citation>
    <scope>NUCLEOTIDE SEQUENCE [LARGE SCALE GENOMIC DNA]</scope>
    <source>
        <strain>MW2</strain>
    </source>
</reference>
<keyword id="KW-0677">Repeat</keyword>
<keyword id="KW-0964">Secreted</keyword>
<keyword id="KW-0732">Signal</keyword>
<keyword id="KW-0843">Virulence</keyword>